<keyword id="KW-0007">Acetylation</keyword>
<keyword id="KW-0053">Apoptosis</keyword>
<keyword id="KW-0067">ATP-binding</keyword>
<keyword id="KW-0963">Cytoplasm</keyword>
<keyword id="KW-0418">Kinase</keyword>
<keyword id="KW-0547">Nucleotide-binding</keyword>
<keyword id="KW-0539">Nucleus</keyword>
<keyword id="KW-0597">Phosphoprotein</keyword>
<keyword id="KW-1185">Reference proteome</keyword>
<keyword id="KW-0723">Serine/threonine-protein kinase</keyword>
<keyword id="KW-0346">Stress response</keyword>
<keyword id="KW-0804">Transcription</keyword>
<keyword id="KW-0805">Transcription regulation</keyword>
<keyword id="KW-0808">Transferase</keyword>
<keyword id="KW-0832">Ubl conjugation</keyword>
<evidence type="ECO:0000250" key="1"/>
<evidence type="ECO:0000250" key="2">
    <source>
        <dbReference type="UniProtKB" id="P47811"/>
    </source>
</evidence>
<evidence type="ECO:0000250" key="3">
    <source>
        <dbReference type="UniProtKB" id="Q16539"/>
    </source>
</evidence>
<evidence type="ECO:0000255" key="4">
    <source>
        <dbReference type="PROSITE-ProRule" id="PRU00159"/>
    </source>
</evidence>
<evidence type="ECO:0000305" key="5"/>
<evidence type="ECO:0000312" key="6">
    <source>
        <dbReference type="EMBL" id="AAF36771.1"/>
    </source>
</evidence>
<gene>
    <name evidence="2" type="primary">MAPK14</name>
    <name type="synonym">CSBP1</name>
</gene>
<accession>Q95NE7</accession>
<comment type="function">
    <text evidence="3">Serine/threonine kinase which acts as an essential component of the MAP kinase signal transduction pathway. MAPK14 is one of the four p38 MAPKs which play an important role in the cascades of cellular responses evoked by extracellular stimuli such as pro-inflammatory cytokines or physical stress leading to direct activation of transcription factors. Accordingly, p38 MAPKs phosphorylate a broad range of proteins and it has been estimated that they may have approximately 200 to 300 substrates each. Some of the targets are downstream kinases which are activated through phosphorylation and further phosphorylate additional targets. RPS6KA5/MSK1 and RPS6KA4/MSK2 can directly phosphorylate and activate transcription factors such as CREB1, ATF1, the NF-kappa-B isoform RELA/NFKB3, STAT1 and STAT3, but can also phosphorylate histone H3 and the nucleosomal protein HMGN1. RPS6KA5/MSK1 and RPS6KA4/MSK2 play important roles in the rapid induction of immediate-early genes in response to stress or mitogenic stimuli, either by inducing chromatin remodeling or by recruiting the transcription machinery. On the other hand, two other kinase targets, MAPKAPK2/MK2 and MAPKAPK3/MK3, participate in the control of gene expression mostly at the post-transcriptional level, by phosphorylating ZFP36 (tristetraprolin) and ELAVL1, and by regulating EEF2K, which is important for the elongation of mRNA during translation. MKNK1/MNK1 and MKNK2/MNK2, two other kinases activated by p38 MAPKs, regulate protein synthesis by phosphorylating the initiation factor EIF4E2. MAPK14 also interacts with casein kinase II, leading to its activation through autophosphorylation and further phosphorylation of TP53/p53. In the cytoplasm, the p38 MAPK pathway is an important regulator of protein turnover. For example, CFLAR is an inhibitor of TNF-induced apoptosis whose proteasome-mediated degradation is regulated by p38 MAPK phosphorylation. In a similar way, MAPK14 phosphorylates the ubiquitin ligase SIAH2, regulating its activity towards EGLN3. MAPK14 may also inhibit the lysosomal degradation pathway of autophagy by interfering with the intracellular trafficking of the transmembrane protein ATG9. Another function of MAPK14 is to regulate the endocytosis of membrane receptors by different mechanisms that impinge on the small GTPase RAB5A. In addition, clathrin-mediated EGFR internalization induced by inflammatory cytokines and UV irradiation depends on MAPK14-mediated phosphorylation of EGFR itself as well as of RAB5A effectors. Ectodomain shedding of transmembrane proteins is regulated by p38 MAPKs as well. In response to inflammatory stimuli, p38 MAPKs phosphorylate the membrane-associated metalloprotease ADAM17. Such phosphorylation is required for ADAM17-mediated ectodomain shedding of TGF-alpha family ligands, which results in the activation of EGFR signaling and cell proliferation. Another p38 MAPK substrate is FGFR1. FGFR1 can be translocated from the extracellular space into the cytosol and nucleus of target cells, and regulates processes such as rRNA synthesis and cell growth. FGFR1 translocation requires p38 MAPK activation. In the nucleus, many transcription factors are phosphorylated and activated by p38 MAPKs in response to different stimuli. Classical examples include ATF1, ATF2, ATF6, ELK1, PTPRH, DDIT3, TP53/p53 and MEF2C and MEF2A. The p38 MAPKs are emerging as important modulators of gene expression by regulating chromatin modifiers and remodelers. The promoters of several genes involved in the inflammatory response, such as IL6, IL8 and IL12B, display a p38 MAPK-dependent enrichment of histone H3 phosphorylation on 'Ser-10' (H3S10ph) in LPS-stimulated myeloid cells. This phosphorylation enhances the accessibility of the cryptic NF-kappa-B-binding sites marking promoters for increased NF-kappa-B recruitment. Phosphorylates CDC25B and CDC25C which is required for binding to 14-3-3 proteins and leads to initiation of a G2 delay after ultraviolet radiation. Phosphorylates TIAR following DNA damage, releasing TIAR from GADD45A mRNA and preventing mRNA degradation. The p38 MAPKs may also have kinase-independent roles, which are thought to be due to the binding to targets in the absence of phosphorylation. Protein O-Glc-N-acylation catalyzed by the OGT is regulated by MAPK14, and, although OGT does not seem to be phosphorylated by MAPK14, their interaction increases upon MAPK14 activation induced by glucose deprivation. This interaction may regulate OGT activity by recruiting it to specific targets such as neurofilament H, stimulating its O-Glc-N-acylation. Required in mid-fetal development for the growth of embryo-derived blood vessels in the labyrinth layer of the placenta. Also plays an essential role in developmental and stress-induced erythropoiesis, through regulation of EPO gene expression (By similarity). Phosphorylates S100A9 at 'Thr-113' (By similarity).</text>
</comment>
<comment type="catalytic activity">
    <reaction evidence="3">
        <text>L-seryl-[protein] + ATP = O-phospho-L-seryl-[protein] + ADP + H(+)</text>
        <dbReference type="Rhea" id="RHEA:17989"/>
        <dbReference type="Rhea" id="RHEA-COMP:9863"/>
        <dbReference type="Rhea" id="RHEA-COMP:11604"/>
        <dbReference type="ChEBI" id="CHEBI:15378"/>
        <dbReference type="ChEBI" id="CHEBI:29999"/>
        <dbReference type="ChEBI" id="CHEBI:30616"/>
        <dbReference type="ChEBI" id="CHEBI:83421"/>
        <dbReference type="ChEBI" id="CHEBI:456216"/>
        <dbReference type="EC" id="2.7.11.24"/>
    </reaction>
</comment>
<comment type="catalytic activity">
    <reaction evidence="3">
        <text>L-threonyl-[protein] + ATP = O-phospho-L-threonyl-[protein] + ADP + H(+)</text>
        <dbReference type="Rhea" id="RHEA:46608"/>
        <dbReference type="Rhea" id="RHEA-COMP:11060"/>
        <dbReference type="Rhea" id="RHEA-COMP:11605"/>
        <dbReference type="ChEBI" id="CHEBI:15378"/>
        <dbReference type="ChEBI" id="CHEBI:30013"/>
        <dbReference type="ChEBI" id="CHEBI:30616"/>
        <dbReference type="ChEBI" id="CHEBI:61977"/>
        <dbReference type="ChEBI" id="CHEBI:456216"/>
        <dbReference type="EC" id="2.7.11.24"/>
    </reaction>
</comment>
<comment type="cofactor">
    <cofactor evidence="3">
        <name>Mg(2+)</name>
        <dbReference type="ChEBI" id="CHEBI:18420"/>
    </cofactor>
</comment>
<comment type="activity regulation">
    <text evidence="3">Activated by cell stresses such as DNA damage, heat shock, osmotic shock, anisomycin and sodium arsenite, as well as pro-inflammatory stimuli such as bacterial lipopolysaccharide (LPS) and interleukin-1. Activation occurs through dual phosphorylation of Thr-180 and Tyr-182 by either of two dual specificity kinases, MAP2K3/MKK3 or MAP2K6/MKK6, and potentially also MAP2K4/MKK4, as well as by TAB1-mediated autophosphorylation. MAPK14 phosphorylated on both Thr-180 and Tyr-182 is 10-20-fold more active than MAPK14 phosphorylated only on Thr-180, whereas MAPK14 phosphorylated on Tyr-182 alone is inactive. whereas Thr-180 is necessary for catalysis, Tyr-182 may be required for auto-activation and substrate recognition. Phosphorylated at Tyr-323 by ZAP70 in an alternative activation pathway in response to TCR signaling in T-cells. This alternative pathway is inhibited by GADD45A. Inhibited by dual specificity phosphatases, such as DUSP1, DUSP10, and DUSP16. Specifically inhibited by the binding of pyridinyl-imidazole compounds, which are cytokine-suppressive anti-inflammatory drugs (CSAID). SB203580 is an inhibitor of MAPK14 (By similarity).</text>
</comment>
<comment type="subunit">
    <text evidence="1 2 3">Component of a signaling complex containing at least AKAP13, PKN1, MAPK14, ZAK and MAP2K3. Within this complex, AKAP13 interacts directly with PKN1, which in turn recruits MAPK14, MAP2K3 and ZAK (By similarity). Binds to a kinase interaction motif within the protein tyrosine phosphatase, PTPRR (By similarity). This interaction retains MAPK14 in the cytoplasm and prevents nuclear accumulation (By similarity). Interacts with SPAG9 and GADD45A (By similarity). Interacts with CDC25B, CDC25C, DUSP1, DUSP10, DUSP16, NP60, SUPT20H and TAB1. Interacts with casein kinase II subunits CSNK2A1 and CSNK2B. Interacts with PPM1D. Interacts with CDK5RAP3; recruits PPM1D to MAPK14 and may regulate its dephosphorylation (By similarity). Interacts with DUSP2; this interaction does not lead to catalytic activation of DUSP2 and dephosphrylation of MAPK14 (By similarity).</text>
</comment>
<comment type="subcellular location">
    <subcellularLocation>
        <location evidence="3">Cytoplasm</location>
    </subcellularLocation>
    <subcellularLocation>
        <location evidence="3">Nucleus</location>
    </subcellularLocation>
</comment>
<comment type="PTM">
    <text evidence="1 3">Dually phosphorylated on Thr-180 and Tyr-182 by the MAP2Ks MAP2K3/MKK3, MAP2K4/MKK4 and MAP2K6/MKK6 in response to inflammatory cytokines, environmental stress or growth factors, which activates the enzyme. Dual phosphorylation can also be mediated by TAB1-mediated autophosphorylation. TCR engagement in T-cells also leads to Tyr-323 phosphorylation by ZAP70. Dephosphorylated and inactivated by DUPS1, DUSP10 and DUSP16 (By similarity). PPM1D also mediates dephosphorylation and inactivation of MAPK14 (By similarity).</text>
</comment>
<comment type="PTM">
    <text evidence="3">Acetylated at Lys-53 and Lys-152 by KAT2B and EP300. Acetylation at Lys-53 increases the affinity for ATP and enhances kinase activity. Lys-53 and Lys-152 are deacetylated by HDAC3 (By similarity).</text>
</comment>
<comment type="PTM">
    <text evidence="3">Ubiquitinated. Ubiquitination leads to degradation by the proteasome pathway (By similarity).</text>
</comment>
<comment type="similarity">
    <text evidence="5">Belongs to the protein kinase superfamily. CMGC Ser/Thr protein kinase family. MAP kinase subfamily.</text>
</comment>
<dbReference type="EC" id="2.7.11.24" evidence="3"/>
<dbReference type="EMBL" id="AF100545">
    <property type="protein sequence ID" value="AAF36771.1"/>
    <property type="molecule type" value="mRNA"/>
</dbReference>
<dbReference type="RefSeq" id="NP_001009065.1">
    <property type="nucleotide sequence ID" value="NM_001009065.1"/>
</dbReference>
<dbReference type="SMR" id="Q95NE7"/>
<dbReference type="FunCoup" id="Q95NE7">
    <property type="interactions" value="4073"/>
</dbReference>
<dbReference type="STRING" id="9598.ENSPTRP00000030915"/>
<dbReference type="PaxDb" id="9598-ENSPTRP00000030915"/>
<dbReference type="Ensembl" id="ENSPTRT00000097220.1">
    <property type="protein sequence ID" value="ENSPTRP00000087556.1"/>
    <property type="gene ID" value="ENSPTRG00000018097.4"/>
</dbReference>
<dbReference type="GeneID" id="450161"/>
<dbReference type="KEGG" id="ptr:450161"/>
<dbReference type="CTD" id="1432"/>
<dbReference type="VGNC" id="VGNC:7197">
    <property type="gene designation" value="MAPK14"/>
</dbReference>
<dbReference type="eggNOG" id="KOG0660">
    <property type="taxonomic scope" value="Eukaryota"/>
</dbReference>
<dbReference type="GeneTree" id="ENSGT00940000155325"/>
<dbReference type="HOGENOM" id="CLU_000288_181_1_1"/>
<dbReference type="InParanoid" id="Q95NE7"/>
<dbReference type="OMA" id="NRYTDLN"/>
<dbReference type="TreeFam" id="TF105100"/>
<dbReference type="BRENDA" id="2.7.11.24">
    <property type="organism ID" value="4497"/>
</dbReference>
<dbReference type="Proteomes" id="UP000002277">
    <property type="component" value="Chromosome 6"/>
</dbReference>
<dbReference type="Bgee" id="ENSPTRG00000018097">
    <property type="expression patterns" value="Expressed in bone marrow and 20 other cell types or tissues"/>
</dbReference>
<dbReference type="GO" id="GO:0005737">
    <property type="term" value="C:cytoplasm"/>
    <property type="evidence" value="ECO:0000250"/>
    <property type="project" value="UniProtKB"/>
</dbReference>
<dbReference type="GO" id="GO:0005634">
    <property type="term" value="C:nucleus"/>
    <property type="evidence" value="ECO:0000250"/>
    <property type="project" value="UniProtKB"/>
</dbReference>
<dbReference type="GO" id="GO:0005524">
    <property type="term" value="F:ATP binding"/>
    <property type="evidence" value="ECO:0007669"/>
    <property type="project" value="UniProtKB-KW"/>
</dbReference>
<dbReference type="GO" id="GO:0004707">
    <property type="term" value="F:MAP kinase activity"/>
    <property type="evidence" value="ECO:0000250"/>
    <property type="project" value="UniProtKB"/>
</dbReference>
<dbReference type="GO" id="GO:0106310">
    <property type="term" value="F:protein serine kinase activity"/>
    <property type="evidence" value="ECO:0007669"/>
    <property type="project" value="RHEA"/>
</dbReference>
<dbReference type="GO" id="GO:0004674">
    <property type="term" value="F:protein serine/threonine kinase activity"/>
    <property type="evidence" value="ECO:0000318"/>
    <property type="project" value="GO_Central"/>
</dbReference>
<dbReference type="GO" id="GO:0006915">
    <property type="term" value="P:apoptotic process"/>
    <property type="evidence" value="ECO:0007669"/>
    <property type="project" value="UniProtKB-KW"/>
</dbReference>
<dbReference type="GO" id="GO:0033554">
    <property type="term" value="P:cellular response to stress"/>
    <property type="evidence" value="ECO:0007669"/>
    <property type="project" value="UniProtKB-ARBA"/>
</dbReference>
<dbReference type="GO" id="GO:0035556">
    <property type="term" value="P:intracellular signal transduction"/>
    <property type="evidence" value="ECO:0000250"/>
    <property type="project" value="UniProtKB"/>
</dbReference>
<dbReference type="GO" id="GO:0038066">
    <property type="term" value="P:p38MAPK cascade"/>
    <property type="evidence" value="ECO:0000250"/>
    <property type="project" value="UniProtKB"/>
</dbReference>
<dbReference type="GO" id="GO:0045663">
    <property type="term" value="P:positive regulation of myoblast differentiation"/>
    <property type="evidence" value="ECO:0000250"/>
    <property type="project" value="UniProtKB"/>
</dbReference>
<dbReference type="GO" id="GO:1901741">
    <property type="term" value="P:positive regulation of myoblast fusion"/>
    <property type="evidence" value="ECO:0000250"/>
    <property type="project" value="UniProtKB"/>
</dbReference>
<dbReference type="GO" id="GO:0010831">
    <property type="term" value="P:positive regulation of myotube differentiation"/>
    <property type="evidence" value="ECO:0000250"/>
    <property type="project" value="UniProtKB"/>
</dbReference>
<dbReference type="GO" id="GO:0006357">
    <property type="term" value="P:regulation of transcription by RNA polymerase II"/>
    <property type="evidence" value="ECO:0000250"/>
    <property type="project" value="UniProtKB"/>
</dbReference>
<dbReference type="CDD" id="cd07877">
    <property type="entry name" value="STKc_p38alpha"/>
    <property type="match status" value="1"/>
</dbReference>
<dbReference type="FunFam" id="1.10.510.10:FF:000063">
    <property type="entry name" value="Mitogen-activated protein kinase 14"/>
    <property type="match status" value="1"/>
</dbReference>
<dbReference type="FunFam" id="3.30.200.20:FF:000769">
    <property type="entry name" value="Mitogen-activated protein kinase 14"/>
    <property type="match status" value="1"/>
</dbReference>
<dbReference type="Gene3D" id="3.30.200.20">
    <property type="entry name" value="Phosphorylase Kinase, domain 1"/>
    <property type="match status" value="1"/>
</dbReference>
<dbReference type="Gene3D" id="1.10.510.10">
    <property type="entry name" value="Transferase(Phosphotransferase) domain 1"/>
    <property type="match status" value="1"/>
</dbReference>
<dbReference type="InterPro" id="IPR011009">
    <property type="entry name" value="Kinase-like_dom_sf"/>
</dbReference>
<dbReference type="InterPro" id="IPR050117">
    <property type="entry name" value="MAP_kinase"/>
</dbReference>
<dbReference type="InterPro" id="IPR003527">
    <property type="entry name" value="MAP_kinase_CS"/>
</dbReference>
<dbReference type="InterPro" id="IPR038784">
    <property type="entry name" value="MAPK14"/>
</dbReference>
<dbReference type="InterPro" id="IPR008352">
    <property type="entry name" value="MAPK_p38-like"/>
</dbReference>
<dbReference type="InterPro" id="IPR000719">
    <property type="entry name" value="Prot_kinase_dom"/>
</dbReference>
<dbReference type="InterPro" id="IPR017441">
    <property type="entry name" value="Protein_kinase_ATP_BS"/>
</dbReference>
<dbReference type="PANTHER" id="PTHR24055">
    <property type="entry name" value="MITOGEN-ACTIVATED PROTEIN KINASE"/>
    <property type="match status" value="1"/>
</dbReference>
<dbReference type="Pfam" id="PF00069">
    <property type="entry name" value="Pkinase"/>
    <property type="match status" value="1"/>
</dbReference>
<dbReference type="PRINTS" id="PR01773">
    <property type="entry name" value="P38MAPKINASE"/>
</dbReference>
<dbReference type="SMART" id="SM00220">
    <property type="entry name" value="S_TKc"/>
    <property type="match status" value="1"/>
</dbReference>
<dbReference type="SUPFAM" id="SSF56112">
    <property type="entry name" value="Protein kinase-like (PK-like)"/>
    <property type="match status" value="1"/>
</dbReference>
<dbReference type="PROSITE" id="PS01351">
    <property type="entry name" value="MAPK"/>
    <property type="match status" value="1"/>
</dbReference>
<dbReference type="PROSITE" id="PS00107">
    <property type="entry name" value="PROTEIN_KINASE_ATP"/>
    <property type="match status" value="1"/>
</dbReference>
<dbReference type="PROSITE" id="PS50011">
    <property type="entry name" value="PROTEIN_KINASE_DOM"/>
    <property type="match status" value="1"/>
</dbReference>
<sequence length="360" mass="41493">MSQERPTFYRQELNKTIWEVPERYQNLSPVGSGAYGSVCAAFDTKTGLRVAVKKLSRPFQSIIHAKRTYRELRLLKHMKHENVIGLLDVFTPARSLEEFNDVYLVTHLMGADLNNIVKCQKLTDDHVQFLIYQILRGLKYIHSADIIHRDLKPSNLAVNEDCELKILDFGLARHTDDEMTGYVATRWYRAPEIMLNWMHYNQTVDIWSVGCIMAELLTGRTLFPGTDHINQLQQIMRLTGTPPAYLINRMPSHEARNYIQSLTQMPKMNFANVFIGANPLAVDLLEKMLVLDSDKRITAAQALAHAYFAQYHDPDDEPVADPYDQSFESRDLLIDEWKSLTYDEVISFVPPPLDQEEMES</sequence>
<name>MK14_PANTR</name>
<protein>
    <recommendedName>
        <fullName evidence="2">Mitogen-activated protein kinase 14</fullName>
        <shortName>MAP kinase 14</shortName>
        <shortName>MAPK 14</shortName>
        <ecNumber evidence="3">2.7.11.24</ecNumber>
    </recommendedName>
    <alternativeName>
        <fullName>Mitogen-activated protein kinase p38 alpha</fullName>
        <shortName>MAP kinase p38 alpha</shortName>
    </alternativeName>
    <alternativeName>
        <fullName>Stress-activated protein kinase 2a</fullName>
    </alternativeName>
</protein>
<proteinExistence type="evidence at transcript level"/>
<organism evidence="6">
    <name type="scientific">Pan troglodytes</name>
    <name type="common">Chimpanzee</name>
    <dbReference type="NCBI Taxonomy" id="9598"/>
    <lineage>
        <taxon>Eukaryota</taxon>
        <taxon>Metazoa</taxon>
        <taxon>Chordata</taxon>
        <taxon>Craniata</taxon>
        <taxon>Vertebrata</taxon>
        <taxon>Euteleostomi</taxon>
        <taxon>Mammalia</taxon>
        <taxon>Eutheria</taxon>
        <taxon>Euarchontoglires</taxon>
        <taxon>Primates</taxon>
        <taxon>Haplorrhini</taxon>
        <taxon>Catarrhini</taxon>
        <taxon>Hominidae</taxon>
        <taxon>Pan</taxon>
    </lineage>
</organism>
<reference evidence="6" key="1">
    <citation type="journal article" date="1999" name="DNA Seq.">
        <title>Structure and polymorphism of two stress-activated protein kinase genes centromeric of the MHC: SAPK2a and SAPK4.</title>
        <authorList>
            <person name="Herbison C.E."/>
            <person name="Sayer D.C."/>
            <person name="Bellgard M."/>
            <person name="Allcock R.J.N."/>
            <person name="Christiansen F.T."/>
            <person name="Price P."/>
        </authorList>
    </citation>
    <scope>NUCLEOTIDE SEQUENCE [MRNA]</scope>
</reference>
<feature type="initiator methionine" description="Removed" evidence="3">
    <location>
        <position position="1"/>
    </location>
</feature>
<feature type="chain" id="PRO_0000186293" description="Mitogen-activated protein kinase 14">
    <location>
        <begin position="2"/>
        <end position="360"/>
    </location>
</feature>
<feature type="domain" description="Protein kinase" evidence="4">
    <location>
        <begin position="24"/>
        <end position="308"/>
    </location>
</feature>
<feature type="active site" description="Proton acceptor" evidence="4">
    <location>
        <position position="150"/>
    </location>
</feature>
<feature type="binding site" evidence="4">
    <location>
        <begin position="30"/>
        <end position="38"/>
    </location>
    <ligand>
        <name>ATP</name>
        <dbReference type="ChEBI" id="CHEBI:30616"/>
    </ligand>
</feature>
<feature type="binding site" evidence="4">
    <location>
        <position position="53"/>
    </location>
    <ligand>
        <name>ATP</name>
        <dbReference type="ChEBI" id="CHEBI:30616"/>
    </ligand>
</feature>
<feature type="modified residue" description="N-acetylserine" evidence="3">
    <location>
        <position position="2"/>
    </location>
</feature>
<feature type="modified residue" description="Phosphoserine" evidence="3">
    <location>
        <position position="2"/>
    </location>
</feature>
<feature type="modified residue" description="Phosphothreonine" evidence="3">
    <location>
        <position position="16"/>
    </location>
</feature>
<feature type="modified residue" description="N6-acetyllysine" evidence="3">
    <location>
        <position position="53"/>
    </location>
</feature>
<feature type="modified residue" description="N6-acetyllysine" evidence="3">
    <location>
        <position position="152"/>
    </location>
</feature>
<feature type="modified residue" description="Phosphothreonine; by MAP2K3, MAP2K4, MAP2K6 and autocatalysis" evidence="3">
    <location>
        <position position="180"/>
    </location>
</feature>
<feature type="modified residue" description="Phosphotyrosine; by MAP2K3, MAP2K4, MAP2K6 and autocatalysis" evidence="3">
    <location>
        <position position="182"/>
    </location>
</feature>
<feature type="modified residue" description="Phosphothreonine" evidence="3">
    <location>
        <position position="263"/>
    </location>
</feature>
<feature type="modified residue" description="Phosphotyrosine; by ZAP70" evidence="3">
    <location>
        <position position="323"/>
    </location>
</feature>